<accession>Q8GLH5</accession>
<evidence type="ECO:0000255" key="1">
    <source>
        <dbReference type="HAMAP-Rule" id="MF_01100"/>
    </source>
</evidence>
<evidence type="ECO:0000255" key="2">
    <source>
        <dbReference type="PROSITE-ProRule" id="PRU01175"/>
    </source>
</evidence>
<evidence type="ECO:0000305" key="3"/>
<dbReference type="EC" id="3.1.3.89" evidence="1"/>
<dbReference type="EMBL" id="AY137386">
    <property type="protein sequence ID" value="AAN08356.1"/>
    <property type="status" value="ALT_INIT"/>
    <property type="molecule type" value="Genomic_DNA"/>
</dbReference>
<dbReference type="SMR" id="Q8GLH5"/>
<dbReference type="GO" id="GO:0005737">
    <property type="term" value="C:cytoplasm"/>
    <property type="evidence" value="ECO:0007669"/>
    <property type="project" value="UniProtKB-SubCell"/>
</dbReference>
<dbReference type="GO" id="GO:0002953">
    <property type="term" value="F:5'-deoxynucleotidase activity"/>
    <property type="evidence" value="ECO:0007669"/>
    <property type="project" value="UniProtKB-EC"/>
</dbReference>
<dbReference type="GO" id="GO:0046872">
    <property type="term" value="F:metal ion binding"/>
    <property type="evidence" value="ECO:0007669"/>
    <property type="project" value="UniProtKB-KW"/>
</dbReference>
<dbReference type="GO" id="GO:0000166">
    <property type="term" value="F:nucleotide binding"/>
    <property type="evidence" value="ECO:0007669"/>
    <property type="project" value="UniProtKB-KW"/>
</dbReference>
<dbReference type="FunFam" id="1.10.3210.10:FF:000002">
    <property type="entry name" value="Nucleotidase YfbR"/>
    <property type="match status" value="1"/>
</dbReference>
<dbReference type="Gene3D" id="1.10.3210.10">
    <property type="entry name" value="Hypothetical protein af1432"/>
    <property type="match status" value="1"/>
</dbReference>
<dbReference type="HAMAP" id="MF_01100">
    <property type="entry name" value="5DNU"/>
    <property type="match status" value="1"/>
</dbReference>
<dbReference type="InterPro" id="IPR003607">
    <property type="entry name" value="HD/PDEase_dom"/>
</dbReference>
<dbReference type="InterPro" id="IPR006674">
    <property type="entry name" value="HD_domain"/>
</dbReference>
<dbReference type="InterPro" id="IPR022971">
    <property type="entry name" value="YfbR"/>
</dbReference>
<dbReference type="InterPro" id="IPR039356">
    <property type="entry name" value="YfbR/HDDC2"/>
</dbReference>
<dbReference type="NCBIfam" id="NF003009">
    <property type="entry name" value="PRK03826.1"/>
    <property type="match status" value="1"/>
</dbReference>
<dbReference type="PANTHER" id="PTHR11845">
    <property type="entry name" value="5'-DEOXYNUCLEOTIDASE HDDC2"/>
    <property type="match status" value="1"/>
</dbReference>
<dbReference type="PANTHER" id="PTHR11845:SF13">
    <property type="entry name" value="5'-DEOXYNUCLEOTIDASE HDDC2"/>
    <property type="match status" value="1"/>
</dbReference>
<dbReference type="Pfam" id="PF12917">
    <property type="entry name" value="YfbR-like"/>
    <property type="match status" value="1"/>
</dbReference>
<dbReference type="SMART" id="SM00471">
    <property type="entry name" value="HDc"/>
    <property type="match status" value="1"/>
</dbReference>
<dbReference type="SUPFAM" id="SSF109604">
    <property type="entry name" value="HD-domain/PDEase-like"/>
    <property type="match status" value="1"/>
</dbReference>
<dbReference type="PROSITE" id="PS51831">
    <property type="entry name" value="HD"/>
    <property type="match status" value="1"/>
</dbReference>
<protein>
    <recommendedName>
        <fullName evidence="1">5'-deoxynucleotidase yfbR</fullName>
        <ecNumber evidence="1">3.1.3.89</ecNumber>
    </recommendedName>
    <alternativeName>
        <fullName evidence="1">5'-deoxyribonucleotidase</fullName>
    </alternativeName>
    <alternativeName>
        <fullName evidence="1">Nucleoside 5'-monophosphate phosphohydrolase</fullName>
    </alternativeName>
</protein>
<organism>
    <name type="scientific">Photorhabdus temperata</name>
    <dbReference type="NCBI Taxonomy" id="574560"/>
    <lineage>
        <taxon>Bacteria</taxon>
        <taxon>Pseudomonadati</taxon>
        <taxon>Pseudomonadota</taxon>
        <taxon>Gammaproteobacteria</taxon>
        <taxon>Enterobacterales</taxon>
        <taxon>Morganellaceae</taxon>
        <taxon>Photorhabdus</taxon>
    </lineage>
</organism>
<keyword id="KW-0963">Cytoplasm</keyword>
<keyword id="KW-0378">Hydrolase</keyword>
<keyword id="KW-0479">Metal-binding</keyword>
<keyword id="KW-0547">Nucleotide-binding</keyword>
<sequence length="197" mass="22516">MSHFFAHLSRLKLINRWPLMRNVRTENVSEHSLQVAFVAHALAIIKNRKFSGNVNAERIALLAMYHDASEVITGDLPTPIKYHNPHIAREYKKIEKIAQKKLLEMLPAELQEDFRPILDDSQHTEEEISIVKQADALCAYLKCLEELSAGNSEFNLAKARLEKTLAARHSQEMDYFMTVFVPGFSLSLDEISLDIPD</sequence>
<gene>
    <name evidence="1" type="primary">yfbR</name>
</gene>
<comment type="function">
    <text evidence="1">Catalyzes the strictly specific dephosphorylation of 2'-deoxyribonucleoside 5'-monophosphates.</text>
</comment>
<comment type="catalytic activity">
    <reaction evidence="1">
        <text>a 2'-deoxyribonucleoside 5'-phosphate + H2O = a 2'-deoxyribonucleoside + phosphate</text>
        <dbReference type="Rhea" id="RHEA:36167"/>
        <dbReference type="ChEBI" id="CHEBI:15377"/>
        <dbReference type="ChEBI" id="CHEBI:18274"/>
        <dbReference type="ChEBI" id="CHEBI:43474"/>
        <dbReference type="ChEBI" id="CHEBI:65317"/>
        <dbReference type="EC" id="3.1.3.89"/>
    </reaction>
</comment>
<comment type="cofactor">
    <cofactor evidence="1">
        <name>a divalent metal cation</name>
        <dbReference type="ChEBI" id="CHEBI:60240"/>
    </cofactor>
</comment>
<comment type="subunit">
    <text evidence="1">Homodimer.</text>
</comment>
<comment type="subcellular location">
    <subcellularLocation>
        <location evidence="1">Cytoplasm</location>
    </subcellularLocation>
</comment>
<comment type="similarity">
    <text evidence="1">Belongs to the 5DNU family.</text>
</comment>
<comment type="sequence caution" evidence="3">
    <conflict type="erroneous initiation">
        <sequence resource="EMBL-CDS" id="AAN08356"/>
    </conflict>
    <text>Extended N-terminus.</text>
</comment>
<proteinExistence type="inferred from homology"/>
<name>5DNU_PHOTE</name>
<feature type="chain" id="PRO_0000095056" description="5'-deoxynucleotidase yfbR">
    <location>
        <begin position="1"/>
        <end position="197"/>
    </location>
</feature>
<feature type="domain" description="HD" evidence="2">
    <location>
        <begin position="28"/>
        <end position="140"/>
    </location>
</feature>
<feature type="binding site" evidence="1">
    <location>
        <begin position="16"/>
        <end position="17"/>
    </location>
    <ligand>
        <name>substrate</name>
    </ligand>
</feature>
<feature type="binding site" evidence="1">
    <location>
        <position position="31"/>
    </location>
    <ligand>
        <name>a divalent metal cation</name>
        <dbReference type="ChEBI" id="CHEBI:60240"/>
    </ligand>
</feature>
<feature type="binding site" evidence="1">
    <location>
        <position position="31"/>
    </location>
    <ligand>
        <name>substrate</name>
    </ligand>
</feature>
<feature type="binding site" evidence="1">
    <location>
        <position position="66"/>
    </location>
    <ligand>
        <name>a divalent metal cation</name>
        <dbReference type="ChEBI" id="CHEBI:60240"/>
    </ligand>
</feature>
<feature type="binding site" evidence="1">
    <location>
        <position position="67"/>
    </location>
    <ligand>
        <name>a divalent metal cation</name>
        <dbReference type="ChEBI" id="CHEBI:60240"/>
    </ligand>
</feature>
<feature type="binding site" evidence="1">
    <location>
        <position position="67"/>
    </location>
    <ligand>
        <name>substrate</name>
    </ligand>
</feature>
<feature type="binding site" evidence="1">
    <location>
        <begin position="75"/>
        <end position="78"/>
    </location>
    <ligand>
        <name>substrate</name>
    </ligand>
</feature>
<feature type="binding site" evidence="1">
    <location>
        <position position="135"/>
    </location>
    <ligand>
        <name>a divalent metal cation</name>
        <dbReference type="ChEBI" id="CHEBI:60240"/>
    </ligand>
</feature>
<feature type="binding site" evidence="1">
    <location>
        <position position="135"/>
    </location>
    <ligand>
        <name>substrate</name>
    </ligand>
</feature>
<feature type="site" description="Appears to be important in orienting the phosphate for catalysis" evidence="1">
    <location>
        <position position="16"/>
    </location>
</feature>
<reference key="1">
    <citation type="journal article" date="2003" name="Mol. Microbiol.">
        <title>A hexA homologue from Photorhabdus regulates pathogenicity, symbiosis and phenotypic variation.</title>
        <authorList>
            <person name="Joyce S.A."/>
            <person name="Clarke D.J."/>
        </authorList>
    </citation>
    <scope>NUCLEOTIDE SEQUENCE [GENOMIC DNA]</scope>
    <source>
        <strain>K122</strain>
    </source>
</reference>